<dbReference type="EC" id="3.4.21.92" evidence="1"/>
<dbReference type="EMBL" id="X54484">
    <property type="protein sequence ID" value="CAA38354.1"/>
    <property type="molecule type" value="Genomic_DNA"/>
</dbReference>
<dbReference type="EMBL" id="AB042240">
    <property type="protein sequence ID" value="BAB47058.1"/>
    <property type="molecule type" value="Genomic_DNA"/>
</dbReference>
<dbReference type="PIR" id="S12408">
    <property type="entry name" value="S12408"/>
</dbReference>
<dbReference type="RefSeq" id="NP_114282.1">
    <property type="nucleotide sequence ID" value="NC_002762.1"/>
</dbReference>
<dbReference type="SMR" id="P24064"/>
<dbReference type="STRING" id="4565.P24064"/>
<dbReference type="MEROPS" id="S14.002"/>
<dbReference type="PaxDb" id="4565-EPlTAEP00000010075"/>
<dbReference type="EnsemblPlants" id="TraesCS1D03G0999800.1">
    <property type="protein sequence ID" value="TraesCS1D03G0999800.1.CDS1"/>
    <property type="gene ID" value="TraesCS1D03G0999800"/>
</dbReference>
<dbReference type="EnsemblPlants" id="TraesJUL3A03G01321810.1">
    <property type="protein sequence ID" value="TraesJUL3A03G01321810.1.CDS1"/>
    <property type="gene ID" value="TraesJUL3A03G01321810"/>
</dbReference>
<dbReference type="EnsemblPlants" id="TraesJUL5D03G03121590.1">
    <property type="protein sequence ID" value="TraesJUL5D03G03121590.1.CDS1"/>
    <property type="gene ID" value="TraesJUL5D03G03121590"/>
</dbReference>
<dbReference type="EnsemblPlants" id="TraesKAR3A01G0005530.1">
    <property type="protein sequence ID" value="cds.TraesKAR3A01G0005530.1"/>
    <property type="gene ID" value="TraesKAR3A01G0005530"/>
</dbReference>
<dbReference type="EnsemblPlants" id="TraesKAR6B01G0219400.1">
    <property type="protein sequence ID" value="cds.TraesKAR6B01G0219400.1"/>
    <property type="gene ID" value="TraesKAR6B01G0219400"/>
</dbReference>
<dbReference type="EnsemblPlants" id="TraesKARUn01G0027330.1">
    <property type="protein sequence ID" value="cds.TraesKARUn01G0027330.1"/>
    <property type="gene ID" value="TraesKARUn01G0027330"/>
</dbReference>
<dbReference type="EnsemblPlants" id="TraesKARUn01G0028220.1">
    <property type="protein sequence ID" value="cds.TraesKARUn01G0028220.1"/>
    <property type="gene ID" value="TraesKARUn01G0028220"/>
</dbReference>
<dbReference type="EnsemblPlants" id="TraesKARUn01G0028810.1">
    <property type="protein sequence ID" value="cds.TraesKARUn01G0028810.1"/>
    <property type="gene ID" value="TraesKARUn01G0028810"/>
</dbReference>
<dbReference type="EnsemblPlants" id="TraesKARUn01G0029490.1">
    <property type="protein sequence ID" value="cds.TraesKARUn01G0029490.1"/>
    <property type="gene ID" value="TraesKARUn01G0029490"/>
</dbReference>
<dbReference type="EnsemblPlants" id="TraesKARUn01G0029620.1">
    <property type="protein sequence ID" value="cds.TraesKARUn01G0029620.1"/>
    <property type="gene ID" value="TraesKARUn01G0029620"/>
</dbReference>
<dbReference type="EnsemblPlants" id="TraesKARUn01G0032100.1">
    <property type="protein sequence ID" value="cds.TraesKARUn01G0032100.1"/>
    <property type="gene ID" value="TraesKARUn01G0032100"/>
</dbReference>
<dbReference type="EnsemblPlants" id="TraesKARUn01G0032640.1">
    <property type="protein sequence ID" value="cds.TraesKARUn01G0032640.1"/>
    <property type="gene ID" value="TraesKARUn01G0032640"/>
</dbReference>
<dbReference type="EnsemblPlants" id="TraesKARUn01G0033690.1">
    <property type="protein sequence ID" value="cds.TraesKARUn01G0033690.1"/>
    <property type="gene ID" value="TraesKARUn01G0033690"/>
</dbReference>
<dbReference type="EnsemblPlants" id="TraesKARUn01G0036230.1">
    <property type="protein sequence ID" value="cds.TraesKARUn01G0036230.1"/>
    <property type="gene ID" value="TraesKARUn01G0036230"/>
</dbReference>
<dbReference type="EnsemblPlants" id="TraesKARUn01G0036750.1">
    <property type="protein sequence ID" value="cds.TraesKARUn01G0036750.1"/>
    <property type="gene ID" value="TraesKARUn01G0036750"/>
</dbReference>
<dbReference type="EnsemblPlants" id="TraesKARUn01G0061420.1">
    <property type="protein sequence ID" value="cds.TraesKARUn01G0061420.1"/>
    <property type="gene ID" value="TraesKARUn01G0061420"/>
</dbReference>
<dbReference type="EnsemblPlants" id="TraesKARUn01G0068510.1">
    <property type="protein sequence ID" value="cds.TraesKARUn01G0068510.1"/>
    <property type="gene ID" value="TraesKARUn01G0068510"/>
</dbReference>
<dbReference type="EnsemblPlants" id="TraesKARUn01G0072770.1">
    <property type="protein sequence ID" value="cds.TraesKARUn01G0072770.1"/>
    <property type="gene ID" value="TraesKARUn01G0072770"/>
</dbReference>
<dbReference type="EnsemblPlants" id="TraesKARUn01G0075380.1">
    <property type="protein sequence ID" value="cds.TraesKARUn01G0075380.1"/>
    <property type="gene ID" value="TraesKARUn01G0075380"/>
</dbReference>
<dbReference type="EnsemblPlants" id="TraesKARUn01G0076860.1">
    <property type="protein sequence ID" value="cds.TraesKARUn01G0076860.1"/>
    <property type="gene ID" value="TraesKARUn01G0076860"/>
</dbReference>
<dbReference type="EnsemblPlants" id="TraesKARUn01G0077330.1">
    <property type="protein sequence ID" value="cds.TraesKARUn01G0077330.1"/>
    <property type="gene ID" value="TraesKARUn01G0077330"/>
</dbReference>
<dbReference type="EnsemblPlants" id="TraesKARUn01G0078100.1">
    <property type="protein sequence ID" value="cds.TraesKARUn01G0078100.1"/>
    <property type="gene ID" value="TraesKARUn01G0078100"/>
</dbReference>
<dbReference type="EnsemblPlants" id="TraesKARUn01G0080270.1">
    <property type="protein sequence ID" value="cds.TraesKARUn01G0080270.1"/>
    <property type="gene ID" value="TraesKARUn01G0080270"/>
</dbReference>
<dbReference type="EnsemblPlants" id="TraesKARUn01G0081830.1">
    <property type="protein sequence ID" value="cds.TraesKARUn01G0081830.1"/>
    <property type="gene ID" value="TraesKARUn01G0081830"/>
</dbReference>
<dbReference type="EnsemblPlants" id="TraesKARUn01G0083190.1">
    <property type="protein sequence ID" value="cds.TraesKARUn01G0083190.1"/>
    <property type="gene ID" value="TraesKARUn01G0083190"/>
</dbReference>
<dbReference type="EnsemblPlants" id="TraesKARUn01G0088210.1">
    <property type="protein sequence ID" value="cds.TraesKARUn01G0088210.1"/>
    <property type="gene ID" value="TraesKARUn01G0088210"/>
</dbReference>
<dbReference type="EnsemblPlants" id="TraesKARUn01G0088340.1">
    <property type="protein sequence ID" value="cds.TraesKARUn01G0088340.1"/>
    <property type="gene ID" value="TraesKARUn01G0088340"/>
</dbReference>
<dbReference type="EnsemblPlants" id="TraesKARUn01G0089670.1">
    <property type="protein sequence ID" value="cds.TraesKARUn01G0089670.1"/>
    <property type="gene ID" value="TraesKARUn01G0089670"/>
</dbReference>
<dbReference type="EnsemblPlants" id="TraesKARUn01G0089800.1">
    <property type="protein sequence ID" value="cds.TraesKARUn01G0089800.1"/>
    <property type="gene ID" value="TraesKARUn01G0089800"/>
</dbReference>
<dbReference type="EnsemblPlants" id="TraesKARUn01G0090450.1">
    <property type="protein sequence ID" value="cds.TraesKARUn01G0090450.1"/>
    <property type="gene ID" value="TraesKARUn01G0090450"/>
</dbReference>
<dbReference type="EnsemblPlants" id="TraesKARUn01G0090620.1">
    <property type="protein sequence ID" value="cds.TraesKARUn01G0090620.1"/>
    <property type="gene ID" value="TraesKARUn01G0090620"/>
</dbReference>
<dbReference type="EnsemblPlants" id="TraesKARUn01G0096200.1">
    <property type="protein sequence ID" value="cds.TraesKARUn01G0096200.1"/>
    <property type="gene ID" value="TraesKARUn01G0096200"/>
</dbReference>
<dbReference type="EnsemblPlants" id="TraesKARUn01G0097290.1">
    <property type="protein sequence ID" value="cds.TraesKARUn01G0097290.1"/>
    <property type="gene ID" value="TraesKARUn01G0097290"/>
</dbReference>
<dbReference type="EnsemblPlants" id="TraesKARUn01G0098200.1">
    <property type="protein sequence ID" value="cds.TraesKARUn01G0098200.1"/>
    <property type="gene ID" value="TraesKARUn01G0098200"/>
</dbReference>
<dbReference type="EnsemblPlants" id="TraesKARUn01G0099040.1">
    <property type="protein sequence ID" value="cds.TraesKARUn01G0099040.1"/>
    <property type="gene ID" value="TraesKARUn01G0099040"/>
</dbReference>
<dbReference type="EnsemblPlants" id="TraesKARUn01G0099760.1">
    <property type="protein sequence ID" value="cds.TraesKARUn01G0099760.1"/>
    <property type="gene ID" value="TraesKARUn01G0099760"/>
</dbReference>
<dbReference type="EnsemblPlants" id="TraesKARUn01G0099900.1">
    <property type="protein sequence ID" value="cds.TraesKARUn01G0099900.1"/>
    <property type="gene ID" value="TraesKARUn01G0099900"/>
</dbReference>
<dbReference type="EnsemblPlants" id="TraesKARUn01G0100380.1">
    <property type="protein sequence ID" value="cds.TraesKARUn01G0100380.1"/>
    <property type="gene ID" value="TraesKARUn01G0100380"/>
</dbReference>
<dbReference type="EnsemblPlants" id="TraesKARUn01G0103870.1">
    <property type="protein sequence ID" value="cds.TraesKARUn01G0103870.1"/>
    <property type="gene ID" value="TraesKARUn01G0103870"/>
</dbReference>
<dbReference type="EnsemblPlants" id="TraesKARUn01G0105490.1">
    <property type="protein sequence ID" value="cds.TraesKARUn01G0105490.1"/>
    <property type="gene ID" value="TraesKARUn01G0105490"/>
</dbReference>
<dbReference type="EnsemblPlants" id="TraesKARUn01G0108300.1">
    <property type="protein sequence ID" value="cds.TraesKARUn01G0108300.1"/>
    <property type="gene ID" value="TraesKARUn01G0108300"/>
</dbReference>
<dbReference type="EnsemblPlants" id="TraesKARUn01G0120210.1">
    <property type="protein sequence ID" value="cds.TraesKARUn01G0120210.1"/>
    <property type="gene ID" value="TraesKARUn01G0120210"/>
</dbReference>
<dbReference type="EnsemblPlants" id="TraesKARUn01G0120470.1">
    <property type="protein sequence ID" value="cds.TraesKARUn01G0120470.1"/>
    <property type="gene ID" value="TraesKARUn01G0120470"/>
</dbReference>
<dbReference type="EnsemblPlants" id="TraesKARUn01G0124280.1">
    <property type="protein sequence ID" value="cds.TraesKARUn01G0124280.1"/>
    <property type="gene ID" value="TraesKARUn01G0124280"/>
</dbReference>
<dbReference type="EnsemblPlants" id="TraesKARUn01G0124500.1">
    <property type="protein sequence ID" value="cds.TraesKARUn01G0124500.1"/>
    <property type="gene ID" value="TraesKARUn01G0124500"/>
</dbReference>
<dbReference type="EnsemblPlants" id="TraesKARUn01G0128040.1">
    <property type="protein sequence ID" value="cds.TraesKARUn01G0128040.1"/>
    <property type="gene ID" value="TraesKARUn01G0128040"/>
</dbReference>
<dbReference type="EnsemblPlants" id="TraesKARUn01G0130010.1">
    <property type="protein sequence ID" value="cds.TraesKARUn01G0130010.1"/>
    <property type="gene ID" value="TraesKARUn01G0130010"/>
</dbReference>
<dbReference type="EnsemblPlants" id="TraesKARUn01G0130190.1">
    <property type="protein sequence ID" value="cds.TraesKARUn01G0130190.1"/>
    <property type="gene ID" value="TraesKARUn01G0130190"/>
</dbReference>
<dbReference type="EnsemblPlants" id="TraesKARUn01G0130420.1">
    <property type="protein sequence ID" value="cds.TraesKARUn01G0130420.1"/>
    <property type="gene ID" value="TraesKARUn01G0130420"/>
</dbReference>
<dbReference type="EnsemblPlants" id="TraesKARUn01G0130600.1">
    <property type="protein sequence ID" value="cds.TraesKARUn01G0130600.1"/>
    <property type="gene ID" value="TraesKARUn01G0130600"/>
</dbReference>
<dbReference type="EnsemblPlants" id="TraesKARUn01G0130680.1">
    <property type="protein sequence ID" value="cds.TraesKARUn01G0130680.1"/>
    <property type="gene ID" value="TraesKARUn01G0130680"/>
</dbReference>
<dbReference type="EnsemblPlants" id="TraesKARUn01G0130690.1">
    <property type="protein sequence ID" value="cds.TraesKARUn01G0130690.1"/>
    <property type="gene ID" value="TraesKARUn01G0130690"/>
</dbReference>
<dbReference type="EnsemblPlants" id="TraesKARUn01G0134470.1">
    <property type="protein sequence ID" value="cds.TraesKARUn01G0134470.1"/>
    <property type="gene ID" value="TraesKARUn01G0134470"/>
</dbReference>
<dbReference type="EnsemblPlants" id="TraesKARUn01G0134590.1">
    <property type="protein sequence ID" value="cds.TraesKARUn01G0134590.1"/>
    <property type="gene ID" value="TraesKARUn01G0134590"/>
</dbReference>
<dbReference type="EnsemblPlants" id="TraesKARUn01G0134960.1">
    <property type="protein sequence ID" value="cds.TraesKARUn01G0134960.1"/>
    <property type="gene ID" value="TraesKARUn01G0134960"/>
</dbReference>
<dbReference type="EnsemblPlants" id="TraesKARUn01G0135540.1">
    <property type="protein sequence ID" value="cds.TraesKARUn01G0135540.1"/>
    <property type="gene ID" value="TraesKARUn01G0135540"/>
</dbReference>
<dbReference type="EnsemblPlants" id="TraesKARUn01G0139690.1">
    <property type="protein sequence ID" value="cds.TraesKARUn01G0139690.1"/>
    <property type="gene ID" value="TraesKARUn01G0139690"/>
</dbReference>
<dbReference type="EnsemblPlants" id="TraesKARUn01G0147040.1">
    <property type="protein sequence ID" value="cds.TraesKARUn01G0147040.1"/>
    <property type="gene ID" value="TraesKARUn01G0147040"/>
</dbReference>
<dbReference type="EnsemblPlants" id="TraesKARUn01G0147280.1">
    <property type="protein sequence ID" value="cds.TraesKARUn01G0147280.1"/>
    <property type="gene ID" value="TraesKARUn01G0147280"/>
</dbReference>
<dbReference type="EnsemblPlants" id="TraesKARUn01G0152160.1">
    <property type="protein sequence ID" value="cds.TraesKARUn01G0152160.1"/>
    <property type="gene ID" value="TraesKARUn01G0152160"/>
</dbReference>
<dbReference type="EnsemblPlants" id="TraesKARUn01G0153040.1">
    <property type="protein sequence ID" value="cds.TraesKARUn01G0153040.1"/>
    <property type="gene ID" value="TraesKARUn01G0153040"/>
</dbReference>
<dbReference type="EnsemblPlants" id="TraesKARUn01G0158840.1">
    <property type="protein sequence ID" value="cds.TraesKARUn01G0158840.1"/>
    <property type="gene ID" value="TraesKARUn01G0158840"/>
</dbReference>
<dbReference type="EnsemblPlants" id="TraesKARUn01G0159280.1">
    <property type="protein sequence ID" value="cds.TraesKARUn01G0159280.1"/>
    <property type="gene ID" value="TraesKARUn01G0159280"/>
</dbReference>
<dbReference type="EnsemblPlants" id="TraesKARUn01G0163430.1">
    <property type="protein sequence ID" value="cds.TraesKARUn01G0163430.1"/>
    <property type="gene ID" value="TraesKARUn01G0163430"/>
</dbReference>
<dbReference type="EnsemblPlants" id="TraesKARUn01G0169080.1">
    <property type="protein sequence ID" value="cds.TraesKARUn01G0169080.1"/>
    <property type="gene ID" value="TraesKARUn01G0169080"/>
</dbReference>
<dbReference type="EnsemblPlants" id="TraesKARUn01G0175250.1">
    <property type="protein sequence ID" value="cds.TraesKARUn01G0175250.1"/>
    <property type="gene ID" value="TraesKARUn01G0175250"/>
</dbReference>
<dbReference type="EnsemblPlants" id="TraesKARUn01G0179020.1">
    <property type="protein sequence ID" value="cds.TraesKARUn01G0179020.1"/>
    <property type="gene ID" value="TraesKARUn01G0179020"/>
</dbReference>
<dbReference type="EnsemblPlants" id="TraesKARUn01G0181530.1">
    <property type="protein sequence ID" value="cds.TraesKARUn01G0181530.1"/>
    <property type="gene ID" value="TraesKARUn01G0181530"/>
</dbReference>
<dbReference type="EnsemblPlants" id="TraesKARUn01G0183300.1">
    <property type="protein sequence ID" value="cds.TraesKARUn01G0183300.1"/>
    <property type="gene ID" value="TraesKARUn01G0183300"/>
</dbReference>
<dbReference type="EnsemblPlants" id="TraesKARUn01G0185510.1">
    <property type="protein sequence ID" value="cds.TraesKARUn01G0185510.1"/>
    <property type="gene ID" value="TraesKARUn01G0185510"/>
</dbReference>
<dbReference type="EnsemblPlants" id="TraesKARUn01G0187660.1">
    <property type="protein sequence ID" value="cds.TraesKARUn01G0187660.1"/>
    <property type="gene ID" value="TraesKARUn01G0187660"/>
</dbReference>
<dbReference type="EnsemblPlants" id="TraesKARUn01G0187950.1">
    <property type="protein sequence ID" value="cds.TraesKARUn01G0187950.1"/>
    <property type="gene ID" value="TraesKARUn01G0187950"/>
</dbReference>
<dbReference type="EnsemblPlants" id="TraesKARUn01G0192030.1">
    <property type="protein sequence ID" value="cds.TraesKARUn01G0192030.1"/>
    <property type="gene ID" value="TraesKARUn01G0192030"/>
</dbReference>
<dbReference type="EnsemblPlants" id="TraesLAC5D03G03052270.1">
    <property type="protein sequence ID" value="TraesLAC5D03G03052270.1.CDS1"/>
    <property type="gene ID" value="TraesLAC5D03G03052270"/>
</dbReference>
<dbReference type="EnsemblPlants" id="TraesLDM5D03G03101030.1">
    <property type="protein sequence ID" value="TraesLDM5D03G03101030.1.CDS1"/>
    <property type="gene ID" value="TraesLDM5D03G03101030"/>
</dbReference>
<dbReference type="EnsemblPlants" id="TraesMAC5D03G03095290.1">
    <property type="protein sequence ID" value="TraesMAC5D03G03095290.1.CDS1"/>
    <property type="gene ID" value="TraesMAC5D03G03095290"/>
</dbReference>
<dbReference type="EnsemblPlants" id="TraesPARA_EIv1.0_1800970.1">
    <property type="protein sequence ID" value="TraesPARA_EIv1.0_1800970.1.CDS1"/>
    <property type="gene ID" value="TraesPARA_EIv1.0_1800970"/>
</dbReference>
<dbReference type="EnsemblPlants" id="TraesPARA_EIv1.0_2054900.1">
    <property type="protein sequence ID" value="TraesPARA_EIv1.0_2054900.1.CDS1"/>
    <property type="gene ID" value="TraesPARA_EIv1.0_2054900"/>
</dbReference>
<dbReference type="EnsemblPlants" id="TraesPARA_EIv1.0_2055500.1">
    <property type="protein sequence ID" value="TraesPARA_EIv1.0_2055500.1.CDS1"/>
    <property type="gene ID" value="TraesPARA_EIv1.0_2055500"/>
</dbReference>
<dbReference type="EnsemblPlants" id="TraesPARA_EIv1.0_2643580.1">
    <property type="protein sequence ID" value="TraesPARA_EIv1.0_2643580.1.CDS1"/>
    <property type="gene ID" value="TraesPARA_EIv1.0_2643580"/>
</dbReference>
<dbReference type="EnsemblPlants" id="TraesPARA_EIv1.0_2643960.1">
    <property type="protein sequence ID" value="TraesPARA_EIv1.0_2643960.1.CDS1"/>
    <property type="gene ID" value="TraesPARA_EIv1.0_2643960"/>
</dbReference>
<dbReference type="EnsemblPlants" id="TraesPARA_EIv1.0_2644820.1">
    <property type="protein sequence ID" value="TraesPARA_EIv1.0_2644820.1.CDS1"/>
    <property type="gene ID" value="TraesPARA_EIv1.0_2644820"/>
</dbReference>
<dbReference type="EnsemblPlants" id="TraesPARA_EIv1.0_2645340.1">
    <property type="protein sequence ID" value="TraesPARA_EIv1.0_2645340.1.CDS1"/>
    <property type="gene ID" value="TraesPARA_EIv1.0_2645340"/>
</dbReference>
<dbReference type="EnsemblPlants" id="TraesPARA_EIv1.0_2645780.1">
    <property type="protein sequence ID" value="TraesPARA_EIv1.0_2645780.1.CDS1"/>
    <property type="gene ID" value="TraesPARA_EIv1.0_2645780"/>
</dbReference>
<dbReference type="EnsemblPlants" id="TraesPARA_EIv1.0_2645880.1">
    <property type="protein sequence ID" value="TraesPARA_EIv1.0_2645880.1.CDS1"/>
    <property type="gene ID" value="TraesPARA_EIv1.0_2645880"/>
</dbReference>
<dbReference type="EnsemblPlants" id="TraesPARA_EIv1.0_2646730.1">
    <property type="protein sequence ID" value="TraesPARA_EIv1.0_2646730.1.CDS1"/>
    <property type="gene ID" value="TraesPARA_EIv1.0_2646730"/>
</dbReference>
<dbReference type="EnsemblPlants" id="TraesPARA_EIv1.0_2648490.1">
    <property type="protein sequence ID" value="TraesPARA_EIv1.0_2648490.1.CDS1"/>
    <property type="gene ID" value="TraesPARA_EIv1.0_2648490"/>
</dbReference>
<dbReference type="EnsemblPlants" id="TraesPARA_EIv1.0_2649260.1">
    <property type="protein sequence ID" value="TraesPARA_EIv1.0_2649260.1.CDS1"/>
    <property type="gene ID" value="TraesPARA_EIv1.0_2649260"/>
</dbReference>
<dbReference type="EnsemblPlants" id="TraesPARA_EIv1.0_2652970.1">
    <property type="protein sequence ID" value="TraesPARA_EIv1.0_2652970.1.CDS1"/>
    <property type="gene ID" value="TraesPARA_EIv1.0_2652970"/>
</dbReference>
<dbReference type="EnsemblPlants" id="TraesPARA_EIv1.0_2653120.1">
    <property type="protein sequence ID" value="TraesPARA_EIv1.0_2653120.1.CDS1"/>
    <property type="gene ID" value="TraesPARA_EIv1.0_2653120"/>
</dbReference>
<dbReference type="EnsemblPlants" id="TraesPARA_EIv1.0_2654730.1">
    <property type="protein sequence ID" value="TraesPARA_EIv1.0_2654730.1.CDS1"/>
    <property type="gene ID" value="TraesPARA_EIv1.0_2654730"/>
</dbReference>
<dbReference type="EnsemblPlants" id="TraesPARA_EIv1.0_2654890.1">
    <property type="protein sequence ID" value="TraesPARA_EIv1.0_2654890.1.CDS1"/>
    <property type="gene ID" value="TraesPARA_EIv1.0_2654890"/>
</dbReference>
<dbReference type="EnsemblPlants" id="TraesPARA_EIv1.0_2655060.1">
    <property type="protein sequence ID" value="TraesPARA_EIv1.0_2655060.1.CDS1"/>
    <property type="gene ID" value="TraesPARA_EIv1.0_2655060"/>
</dbReference>
<dbReference type="EnsemblPlants" id="TraesPARA_EIv1.0_2665660.1">
    <property type="protein sequence ID" value="TraesPARA_EIv1.0_2665660.1.CDS1"/>
    <property type="gene ID" value="TraesPARA_EIv1.0_2665660"/>
</dbReference>
<dbReference type="EnsemblPlants" id="TraesPARA_EIv1.0_2666190.1">
    <property type="protein sequence ID" value="TraesPARA_EIv1.0_2666190.1.CDS1"/>
    <property type="gene ID" value="TraesPARA_EIv1.0_2666190"/>
</dbReference>
<dbReference type="EnsemblPlants" id="TraesPARA_EIv1.0_2672640.1">
    <property type="protein sequence ID" value="TraesPARA_EIv1.0_2672640.1.CDS1"/>
    <property type="gene ID" value="TraesPARA_EIv1.0_2672640"/>
</dbReference>
<dbReference type="EnsemblPlants" id="TraesPARA_EIv1.0_2676670.1">
    <property type="protein sequence ID" value="TraesPARA_EIv1.0_2676670.1.CDS1"/>
    <property type="gene ID" value="TraesPARA_EIv1.0_2676670"/>
</dbReference>
<dbReference type="EnsemblPlants" id="TraesPARA_EIv1.0_2679840.1">
    <property type="protein sequence ID" value="TraesPARA_EIv1.0_2679840.1.CDS1"/>
    <property type="gene ID" value="TraesPARA_EIv1.0_2679840"/>
</dbReference>
<dbReference type="EnsemblPlants" id="TraesPARA_EIv1.0_2680210.1">
    <property type="protein sequence ID" value="TraesPARA_EIv1.0_2680210.1.CDS1"/>
    <property type="gene ID" value="TraesPARA_EIv1.0_2680210"/>
</dbReference>
<dbReference type="EnsemblPlants" id="TraesPARA_EIv1.0_2680450.1">
    <property type="protein sequence ID" value="TraesPARA_EIv1.0_2680450.1.CDS1"/>
    <property type="gene ID" value="TraesPARA_EIv1.0_2680450"/>
</dbReference>
<dbReference type="EnsemblPlants" id="TraesPARA_EIv1.0_2681820.1">
    <property type="protein sequence ID" value="TraesPARA_EIv1.0_2681820.1.CDS1"/>
    <property type="gene ID" value="TraesPARA_EIv1.0_2681820"/>
</dbReference>
<dbReference type="EnsemblPlants" id="TraesPARA_EIv1.0_2682020.1">
    <property type="protein sequence ID" value="TraesPARA_EIv1.0_2682020.1.CDS1"/>
    <property type="gene ID" value="TraesPARA_EIv1.0_2682020"/>
</dbReference>
<dbReference type="EnsemblPlants" id="TraesRN1D0101058800.1">
    <property type="protein sequence ID" value="TraesRN1D0101058800.1"/>
    <property type="gene ID" value="TraesRN1D0101058800"/>
</dbReference>
<dbReference type="EnsemblPlants" id="TraesRN3B0100438300.1">
    <property type="protein sequence ID" value="TraesRN3B0100438300.1"/>
    <property type="gene ID" value="TraesRN3B0100438300"/>
</dbReference>
<dbReference type="EnsemblPlants" id="TraesRN3D0100108100.1">
    <property type="protein sequence ID" value="TraesRN3D0100108100.1"/>
    <property type="gene ID" value="TraesRN3D0100108100"/>
</dbReference>
<dbReference type="EnsemblPlants" id="TraesSYM3B03G01564020.1">
    <property type="protein sequence ID" value="TraesSYM3B03G01564020.1.CDS1"/>
    <property type="gene ID" value="TraesSYM3B03G01564020"/>
</dbReference>
<dbReference type="GeneID" id="803203"/>
<dbReference type="Gramene" id="TraesCS1D03G0999800.1">
    <property type="protein sequence ID" value="TraesCS1D03G0999800.1.CDS1"/>
    <property type="gene ID" value="TraesCS1D03G0999800"/>
</dbReference>
<dbReference type="Gramene" id="TraesJUL3A03G01321810.1">
    <property type="protein sequence ID" value="TraesJUL3A03G01321810.1.CDS1"/>
    <property type="gene ID" value="TraesJUL3A03G01321810"/>
</dbReference>
<dbReference type="Gramene" id="TraesJUL5D03G03121590.1">
    <property type="protein sequence ID" value="TraesJUL5D03G03121590.1.CDS1"/>
    <property type="gene ID" value="TraesJUL5D03G03121590"/>
</dbReference>
<dbReference type="Gramene" id="TraesKAR3A01G0005530.1">
    <property type="protein sequence ID" value="cds.TraesKAR3A01G0005530.1"/>
    <property type="gene ID" value="TraesKAR3A01G0005530"/>
</dbReference>
<dbReference type="Gramene" id="TraesKAR6B01G0219400.1">
    <property type="protein sequence ID" value="cds.TraesKAR6B01G0219400.1"/>
    <property type="gene ID" value="TraesKAR6B01G0219400"/>
</dbReference>
<dbReference type="Gramene" id="TraesKARUn01G0027330.1">
    <property type="protein sequence ID" value="cds.TraesKARUn01G0027330.1"/>
    <property type="gene ID" value="TraesKARUn01G0027330"/>
</dbReference>
<dbReference type="Gramene" id="TraesKARUn01G0028220.1">
    <property type="protein sequence ID" value="cds.TraesKARUn01G0028220.1"/>
    <property type="gene ID" value="TraesKARUn01G0028220"/>
</dbReference>
<dbReference type="Gramene" id="TraesKARUn01G0028810.1">
    <property type="protein sequence ID" value="cds.TraesKARUn01G0028810.1"/>
    <property type="gene ID" value="TraesKARUn01G0028810"/>
</dbReference>
<dbReference type="Gramene" id="TraesKARUn01G0029490.1">
    <property type="protein sequence ID" value="cds.TraesKARUn01G0029490.1"/>
    <property type="gene ID" value="TraesKARUn01G0029490"/>
</dbReference>
<dbReference type="Gramene" id="TraesKARUn01G0029620.1">
    <property type="protein sequence ID" value="cds.TraesKARUn01G0029620.1"/>
    <property type="gene ID" value="TraesKARUn01G0029620"/>
</dbReference>
<dbReference type="Gramene" id="TraesKARUn01G0032100.1">
    <property type="protein sequence ID" value="cds.TraesKARUn01G0032100.1"/>
    <property type="gene ID" value="TraesKARUn01G0032100"/>
</dbReference>
<dbReference type="Gramene" id="TraesKARUn01G0032640.1">
    <property type="protein sequence ID" value="cds.TraesKARUn01G0032640.1"/>
    <property type="gene ID" value="TraesKARUn01G0032640"/>
</dbReference>
<dbReference type="Gramene" id="TraesKARUn01G0033690.1">
    <property type="protein sequence ID" value="cds.TraesKARUn01G0033690.1"/>
    <property type="gene ID" value="TraesKARUn01G0033690"/>
</dbReference>
<dbReference type="Gramene" id="TraesKARUn01G0036230.1">
    <property type="protein sequence ID" value="cds.TraesKARUn01G0036230.1"/>
    <property type="gene ID" value="TraesKARUn01G0036230"/>
</dbReference>
<dbReference type="Gramene" id="TraesKARUn01G0036750.1">
    <property type="protein sequence ID" value="cds.TraesKARUn01G0036750.1"/>
    <property type="gene ID" value="TraesKARUn01G0036750"/>
</dbReference>
<dbReference type="Gramene" id="TraesKARUn01G0061420.1">
    <property type="protein sequence ID" value="cds.TraesKARUn01G0061420.1"/>
    <property type="gene ID" value="TraesKARUn01G0061420"/>
</dbReference>
<dbReference type="Gramene" id="TraesKARUn01G0068510.1">
    <property type="protein sequence ID" value="cds.TraesKARUn01G0068510.1"/>
    <property type="gene ID" value="TraesKARUn01G0068510"/>
</dbReference>
<dbReference type="Gramene" id="TraesKARUn01G0072770.1">
    <property type="protein sequence ID" value="cds.TraesKARUn01G0072770.1"/>
    <property type="gene ID" value="TraesKARUn01G0072770"/>
</dbReference>
<dbReference type="Gramene" id="TraesKARUn01G0075380.1">
    <property type="protein sequence ID" value="cds.TraesKARUn01G0075380.1"/>
    <property type="gene ID" value="TraesKARUn01G0075380"/>
</dbReference>
<dbReference type="Gramene" id="TraesKARUn01G0076860.1">
    <property type="protein sequence ID" value="cds.TraesKARUn01G0076860.1"/>
    <property type="gene ID" value="TraesKARUn01G0076860"/>
</dbReference>
<dbReference type="Gramene" id="TraesKARUn01G0077330.1">
    <property type="protein sequence ID" value="cds.TraesKARUn01G0077330.1"/>
    <property type="gene ID" value="TraesKARUn01G0077330"/>
</dbReference>
<dbReference type="Gramene" id="TraesKARUn01G0078100.1">
    <property type="protein sequence ID" value="cds.TraesKARUn01G0078100.1"/>
    <property type="gene ID" value="TraesKARUn01G0078100"/>
</dbReference>
<dbReference type="Gramene" id="TraesKARUn01G0080270.1">
    <property type="protein sequence ID" value="cds.TraesKARUn01G0080270.1"/>
    <property type="gene ID" value="TraesKARUn01G0080270"/>
</dbReference>
<dbReference type="Gramene" id="TraesKARUn01G0081830.1">
    <property type="protein sequence ID" value="cds.TraesKARUn01G0081830.1"/>
    <property type="gene ID" value="TraesKARUn01G0081830"/>
</dbReference>
<dbReference type="Gramene" id="TraesKARUn01G0083190.1">
    <property type="protein sequence ID" value="cds.TraesKARUn01G0083190.1"/>
    <property type="gene ID" value="TraesKARUn01G0083190"/>
</dbReference>
<dbReference type="Gramene" id="TraesKARUn01G0088210.1">
    <property type="protein sequence ID" value="cds.TraesKARUn01G0088210.1"/>
    <property type="gene ID" value="TraesKARUn01G0088210"/>
</dbReference>
<dbReference type="Gramene" id="TraesKARUn01G0088340.1">
    <property type="protein sequence ID" value="cds.TraesKARUn01G0088340.1"/>
    <property type="gene ID" value="TraesKARUn01G0088340"/>
</dbReference>
<dbReference type="Gramene" id="TraesKARUn01G0089670.1">
    <property type="protein sequence ID" value="cds.TraesKARUn01G0089670.1"/>
    <property type="gene ID" value="TraesKARUn01G0089670"/>
</dbReference>
<dbReference type="Gramene" id="TraesKARUn01G0089800.1">
    <property type="protein sequence ID" value="cds.TraesKARUn01G0089800.1"/>
    <property type="gene ID" value="TraesKARUn01G0089800"/>
</dbReference>
<dbReference type="Gramene" id="TraesKARUn01G0090450.1">
    <property type="protein sequence ID" value="cds.TraesKARUn01G0090450.1"/>
    <property type="gene ID" value="TraesKARUn01G0090450"/>
</dbReference>
<dbReference type="Gramene" id="TraesKARUn01G0090620.1">
    <property type="protein sequence ID" value="cds.TraesKARUn01G0090620.1"/>
    <property type="gene ID" value="TraesKARUn01G0090620"/>
</dbReference>
<dbReference type="Gramene" id="TraesKARUn01G0096200.1">
    <property type="protein sequence ID" value="cds.TraesKARUn01G0096200.1"/>
    <property type="gene ID" value="TraesKARUn01G0096200"/>
</dbReference>
<dbReference type="Gramene" id="TraesKARUn01G0097290.1">
    <property type="protein sequence ID" value="cds.TraesKARUn01G0097290.1"/>
    <property type="gene ID" value="TraesKARUn01G0097290"/>
</dbReference>
<dbReference type="Gramene" id="TraesKARUn01G0098200.1">
    <property type="protein sequence ID" value="cds.TraesKARUn01G0098200.1"/>
    <property type="gene ID" value="TraesKARUn01G0098200"/>
</dbReference>
<dbReference type="Gramene" id="TraesKARUn01G0099040.1">
    <property type="protein sequence ID" value="cds.TraesKARUn01G0099040.1"/>
    <property type="gene ID" value="TraesKARUn01G0099040"/>
</dbReference>
<dbReference type="Gramene" id="TraesKARUn01G0099760.1">
    <property type="protein sequence ID" value="cds.TraesKARUn01G0099760.1"/>
    <property type="gene ID" value="TraesKARUn01G0099760"/>
</dbReference>
<dbReference type="Gramene" id="TraesKARUn01G0099900.1">
    <property type="protein sequence ID" value="cds.TraesKARUn01G0099900.1"/>
    <property type="gene ID" value="TraesKARUn01G0099900"/>
</dbReference>
<dbReference type="Gramene" id="TraesKARUn01G0100380.1">
    <property type="protein sequence ID" value="cds.TraesKARUn01G0100380.1"/>
    <property type="gene ID" value="TraesKARUn01G0100380"/>
</dbReference>
<dbReference type="Gramene" id="TraesKARUn01G0103870.1">
    <property type="protein sequence ID" value="cds.TraesKARUn01G0103870.1"/>
    <property type="gene ID" value="TraesKARUn01G0103870"/>
</dbReference>
<dbReference type="Gramene" id="TraesKARUn01G0105490.1">
    <property type="protein sequence ID" value="cds.TraesKARUn01G0105490.1"/>
    <property type="gene ID" value="TraesKARUn01G0105490"/>
</dbReference>
<dbReference type="Gramene" id="TraesKARUn01G0108300.1">
    <property type="protein sequence ID" value="cds.TraesKARUn01G0108300.1"/>
    <property type="gene ID" value="TraesKARUn01G0108300"/>
</dbReference>
<dbReference type="Gramene" id="TraesKARUn01G0120210.1">
    <property type="protein sequence ID" value="cds.TraesKARUn01G0120210.1"/>
    <property type="gene ID" value="TraesKARUn01G0120210"/>
</dbReference>
<dbReference type="Gramene" id="TraesKARUn01G0120470.1">
    <property type="protein sequence ID" value="cds.TraesKARUn01G0120470.1"/>
    <property type="gene ID" value="TraesKARUn01G0120470"/>
</dbReference>
<dbReference type="Gramene" id="TraesKARUn01G0124280.1">
    <property type="protein sequence ID" value="cds.TraesKARUn01G0124280.1"/>
    <property type="gene ID" value="TraesKARUn01G0124280"/>
</dbReference>
<dbReference type="Gramene" id="TraesKARUn01G0124500.1">
    <property type="protein sequence ID" value="cds.TraesKARUn01G0124500.1"/>
    <property type="gene ID" value="TraesKARUn01G0124500"/>
</dbReference>
<dbReference type="Gramene" id="TraesKARUn01G0128040.1">
    <property type="protein sequence ID" value="cds.TraesKARUn01G0128040.1"/>
    <property type="gene ID" value="TraesKARUn01G0128040"/>
</dbReference>
<dbReference type="Gramene" id="TraesKARUn01G0130010.1">
    <property type="protein sequence ID" value="cds.TraesKARUn01G0130010.1"/>
    <property type="gene ID" value="TraesKARUn01G0130010"/>
</dbReference>
<dbReference type="Gramene" id="TraesKARUn01G0130190.1">
    <property type="protein sequence ID" value="cds.TraesKARUn01G0130190.1"/>
    <property type="gene ID" value="TraesKARUn01G0130190"/>
</dbReference>
<dbReference type="Gramene" id="TraesKARUn01G0130420.1">
    <property type="protein sequence ID" value="cds.TraesKARUn01G0130420.1"/>
    <property type="gene ID" value="TraesKARUn01G0130420"/>
</dbReference>
<dbReference type="Gramene" id="TraesKARUn01G0130600.1">
    <property type="protein sequence ID" value="cds.TraesKARUn01G0130600.1"/>
    <property type="gene ID" value="TraesKARUn01G0130600"/>
</dbReference>
<dbReference type="Gramene" id="TraesKARUn01G0130680.1">
    <property type="protein sequence ID" value="cds.TraesKARUn01G0130680.1"/>
    <property type="gene ID" value="TraesKARUn01G0130680"/>
</dbReference>
<dbReference type="Gramene" id="TraesKARUn01G0130690.1">
    <property type="protein sequence ID" value="cds.TraesKARUn01G0130690.1"/>
    <property type="gene ID" value="TraesKARUn01G0130690"/>
</dbReference>
<dbReference type="Gramene" id="TraesKARUn01G0134470.1">
    <property type="protein sequence ID" value="cds.TraesKARUn01G0134470.1"/>
    <property type="gene ID" value="TraesKARUn01G0134470"/>
</dbReference>
<dbReference type="Gramene" id="TraesKARUn01G0134590.1">
    <property type="protein sequence ID" value="cds.TraesKARUn01G0134590.1"/>
    <property type="gene ID" value="TraesKARUn01G0134590"/>
</dbReference>
<dbReference type="Gramene" id="TraesKARUn01G0134960.1">
    <property type="protein sequence ID" value="cds.TraesKARUn01G0134960.1"/>
    <property type="gene ID" value="TraesKARUn01G0134960"/>
</dbReference>
<dbReference type="Gramene" id="TraesKARUn01G0135540.1">
    <property type="protein sequence ID" value="cds.TraesKARUn01G0135540.1"/>
    <property type="gene ID" value="TraesKARUn01G0135540"/>
</dbReference>
<dbReference type="Gramene" id="TraesKARUn01G0139690.1">
    <property type="protein sequence ID" value="cds.TraesKARUn01G0139690.1"/>
    <property type="gene ID" value="TraesKARUn01G0139690"/>
</dbReference>
<dbReference type="Gramene" id="TraesKARUn01G0147040.1">
    <property type="protein sequence ID" value="cds.TraesKARUn01G0147040.1"/>
    <property type="gene ID" value="TraesKARUn01G0147040"/>
</dbReference>
<dbReference type="Gramene" id="TraesKARUn01G0147280.1">
    <property type="protein sequence ID" value="cds.TraesKARUn01G0147280.1"/>
    <property type="gene ID" value="TraesKARUn01G0147280"/>
</dbReference>
<dbReference type="Gramene" id="TraesKARUn01G0152160.1">
    <property type="protein sequence ID" value="cds.TraesKARUn01G0152160.1"/>
    <property type="gene ID" value="TraesKARUn01G0152160"/>
</dbReference>
<dbReference type="Gramene" id="TraesKARUn01G0153040.1">
    <property type="protein sequence ID" value="cds.TraesKARUn01G0153040.1"/>
    <property type="gene ID" value="TraesKARUn01G0153040"/>
</dbReference>
<dbReference type="Gramene" id="TraesKARUn01G0158840.1">
    <property type="protein sequence ID" value="cds.TraesKARUn01G0158840.1"/>
    <property type="gene ID" value="TraesKARUn01G0158840"/>
</dbReference>
<dbReference type="Gramene" id="TraesKARUn01G0159280.1">
    <property type="protein sequence ID" value="cds.TraesKARUn01G0159280.1"/>
    <property type="gene ID" value="TraesKARUn01G0159280"/>
</dbReference>
<dbReference type="Gramene" id="TraesKARUn01G0163430.1">
    <property type="protein sequence ID" value="cds.TraesKARUn01G0163430.1"/>
    <property type="gene ID" value="TraesKARUn01G0163430"/>
</dbReference>
<dbReference type="Gramene" id="TraesKARUn01G0169080.1">
    <property type="protein sequence ID" value="cds.TraesKARUn01G0169080.1"/>
    <property type="gene ID" value="TraesKARUn01G0169080"/>
</dbReference>
<dbReference type="Gramene" id="TraesKARUn01G0175250.1">
    <property type="protein sequence ID" value="cds.TraesKARUn01G0175250.1"/>
    <property type="gene ID" value="TraesKARUn01G0175250"/>
</dbReference>
<dbReference type="Gramene" id="TraesKARUn01G0179020.1">
    <property type="protein sequence ID" value="cds.TraesKARUn01G0179020.1"/>
    <property type="gene ID" value="TraesKARUn01G0179020"/>
</dbReference>
<dbReference type="Gramene" id="TraesKARUn01G0181530.1">
    <property type="protein sequence ID" value="cds.TraesKARUn01G0181530.1"/>
    <property type="gene ID" value="TraesKARUn01G0181530"/>
</dbReference>
<dbReference type="Gramene" id="TraesKARUn01G0183300.1">
    <property type="protein sequence ID" value="cds.TraesKARUn01G0183300.1"/>
    <property type="gene ID" value="TraesKARUn01G0183300"/>
</dbReference>
<dbReference type="Gramene" id="TraesKARUn01G0185510.1">
    <property type="protein sequence ID" value="cds.TraesKARUn01G0185510.1"/>
    <property type="gene ID" value="TraesKARUn01G0185510"/>
</dbReference>
<dbReference type="Gramene" id="TraesKARUn01G0187660.1">
    <property type="protein sequence ID" value="cds.TraesKARUn01G0187660.1"/>
    <property type="gene ID" value="TraesKARUn01G0187660"/>
</dbReference>
<dbReference type="Gramene" id="TraesKARUn01G0187950.1">
    <property type="protein sequence ID" value="cds.TraesKARUn01G0187950.1"/>
    <property type="gene ID" value="TraesKARUn01G0187950"/>
</dbReference>
<dbReference type="Gramene" id="TraesKARUn01G0192030.1">
    <property type="protein sequence ID" value="cds.TraesKARUn01G0192030.1"/>
    <property type="gene ID" value="TraesKARUn01G0192030"/>
</dbReference>
<dbReference type="Gramene" id="TraesLAC5D03G03052270.1">
    <property type="protein sequence ID" value="TraesLAC5D03G03052270.1.CDS1"/>
    <property type="gene ID" value="TraesLAC5D03G03052270"/>
</dbReference>
<dbReference type="Gramene" id="TraesLDM5D03G03101030.1">
    <property type="protein sequence ID" value="TraesLDM5D03G03101030.1.CDS1"/>
    <property type="gene ID" value="TraesLDM5D03G03101030"/>
</dbReference>
<dbReference type="Gramene" id="TraesMAC5D03G03095290.1">
    <property type="protein sequence ID" value="TraesMAC5D03G03095290.1.CDS1"/>
    <property type="gene ID" value="TraesMAC5D03G03095290"/>
</dbReference>
<dbReference type="Gramene" id="TraesPARA_EIv1.0_1800970.1">
    <property type="protein sequence ID" value="TraesPARA_EIv1.0_1800970.1.CDS1"/>
    <property type="gene ID" value="TraesPARA_EIv1.0_1800970"/>
</dbReference>
<dbReference type="Gramene" id="TraesPARA_EIv1.0_2054900.1">
    <property type="protein sequence ID" value="TraesPARA_EIv1.0_2054900.1.CDS1"/>
    <property type="gene ID" value="TraesPARA_EIv1.0_2054900"/>
</dbReference>
<dbReference type="Gramene" id="TraesPARA_EIv1.0_2055500.1">
    <property type="protein sequence ID" value="TraesPARA_EIv1.0_2055500.1.CDS1"/>
    <property type="gene ID" value="TraesPARA_EIv1.0_2055500"/>
</dbReference>
<dbReference type="Gramene" id="TraesPARA_EIv1.0_2643580.1">
    <property type="protein sequence ID" value="TraesPARA_EIv1.0_2643580.1.CDS1"/>
    <property type="gene ID" value="TraesPARA_EIv1.0_2643580"/>
</dbReference>
<dbReference type="Gramene" id="TraesPARA_EIv1.0_2643960.1">
    <property type="protein sequence ID" value="TraesPARA_EIv1.0_2643960.1.CDS1"/>
    <property type="gene ID" value="TraesPARA_EIv1.0_2643960"/>
</dbReference>
<dbReference type="Gramene" id="TraesPARA_EIv1.0_2644820.1">
    <property type="protein sequence ID" value="TraesPARA_EIv1.0_2644820.1.CDS1"/>
    <property type="gene ID" value="TraesPARA_EIv1.0_2644820"/>
</dbReference>
<dbReference type="Gramene" id="TraesPARA_EIv1.0_2645340.1">
    <property type="protein sequence ID" value="TraesPARA_EIv1.0_2645340.1.CDS1"/>
    <property type="gene ID" value="TraesPARA_EIv1.0_2645340"/>
</dbReference>
<dbReference type="Gramene" id="TraesPARA_EIv1.0_2645780.1">
    <property type="protein sequence ID" value="TraesPARA_EIv1.0_2645780.1.CDS1"/>
    <property type="gene ID" value="TraesPARA_EIv1.0_2645780"/>
</dbReference>
<dbReference type="Gramene" id="TraesPARA_EIv1.0_2645880.1">
    <property type="protein sequence ID" value="TraesPARA_EIv1.0_2645880.1.CDS1"/>
    <property type="gene ID" value="TraesPARA_EIv1.0_2645880"/>
</dbReference>
<dbReference type="Gramene" id="TraesPARA_EIv1.0_2646730.1">
    <property type="protein sequence ID" value="TraesPARA_EIv1.0_2646730.1.CDS1"/>
    <property type="gene ID" value="TraesPARA_EIv1.0_2646730"/>
</dbReference>
<dbReference type="Gramene" id="TraesPARA_EIv1.0_2648490.1">
    <property type="protein sequence ID" value="TraesPARA_EIv1.0_2648490.1.CDS1"/>
    <property type="gene ID" value="TraesPARA_EIv1.0_2648490"/>
</dbReference>
<dbReference type="Gramene" id="TraesPARA_EIv1.0_2649260.1">
    <property type="protein sequence ID" value="TraesPARA_EIv1.0_2649260.1.CDS1"/>
    <property type="gene ID" value="TraesPARA_EIv1.0_2649260"/>
</dbReference>
<dbReference type="Gramene" id="TraesPARA_EIv1.0_2652970.1">
    <property type="protein sequence ID" value="TraesPARA_EIv1.0_2652970.1.CDS1"/>
    <property type="gene ID" value="TraesPARA_EIv1.0_2652970"/>
</dbReference>
<dbReference type="Gramene" id="TraesPARA_EIv1.0_2653120.1">
    <property type="protein sequence ID" value="TraesPARA_EIv1.0_2653120.1.CDS1"/>
    <property type="gene ID" value="TraesPARA_EIv1.0_2653120"/>
</dbReference>
<dbReference type="Gramene" id="TraesPARA_EIv1.0_2654730.1">
    <property type="protein sequence ID" value="TraesPARA_EIv1.0_2654730.1.CDS1"/>
    <property type="gene ID" value="TraesPARA_EIv1.0_2654730"/>
</dbReference>
<dbReference type="Gramene" id="TraesPARA_EIv1.0_2654890.1">
    <property type="protein sequence ID" value="TraesPARA_EIv1.0_2654890.1.CDS1"/>
    <property type="gene ID" value="TraesPARA_EIv1.0_2654890"/>
</dbReference>
<dbReference type="Gramene" id="TraesPARA_EIv1.0_2655060.1">
    <property type="protein sequence ID" value="TraesPARA_EIv1.0_2655060.1.CDS1"/>
    <property type="gene ID" value="TraesPARA_EIv1.0_2655060"/>
</dbReference>
<dbReference type="Gramene" id="TraesPARA_EIv1.0_2665660.1">
    <property type="protein sequence ID" value="TraesPARA_EIv1.0_2665660.1.CDS1"/>
    <property type="gene ID" value="TraesPARA_EIv1.0_2665660"/>
</dbReference>
<dbReference type="Gramene" id="TraesPARA_EIv1.0_2666190.1">
    <property type="protein sequence ID" value="TraesPARA_EIv1.0_2666190.1.CDS1"/>
    <property type="gene ID" value="TraesPARA_EIv1.0_2666190"/>
</dbReference>
<dbReference type="Gramene" id="TraesPARA_EIv1.0_2672640.1">
    <property type="protein sequence ID" value="TraesPARA_EIv1.0_2672640.1.CDS1"/>
    <property type="gene ID" value="TraesPARA_EIv1.0_2672640"/>
</dbReference>
<dbReference type="Gramene" id="TraesPARA_EIv1.0_2676670.1">
    <property type="protein sequence ID" value="TraesPARA_EIv1.0_2676670.1.CDS1"/>
    <property type="gene ID" value="TraesPARA_EIv1.0_2676670"/>
</dbReference>
<dbReference type="Gramene" id="TraesPARA_EIv1.0_2679840.1">
    <property type="protein sequence ID" value="TraesPARA_EIv1.0_2679840.1.CDS1"/>
    <property type="gene ID" value="TraesPARA_EIv1.0_2679840"/>
</dbReference>
<dbReference type="Gramene" id="TraesPARA_EIv1.0_2680210.1">
    <property type="protein sequence ID" value="TraesPARA_EIv1.0_2680210.1.CDS1"/>
    <property type="gene ID" value="TraesPARA_EIv1.0_2680210"/>
</dbReference>
<dbReference type="Gramene" id="TraesPARA_EIv1.0_2680450.1">
    <property type="protein sequence ID" value="TraesPARA_EIv1.0_2680450.1.CDS1"/>
    <property type="gene ID" value="TraesPARA_EIv1.0_2680450"/>
</dbReference>
<dbReference type="Gramene" id="TraesPARA_EIv1.0_2681820.1">
    <property type="protein sequence ID" value="TraesPARA_EIv1.0_2681820.1.CDS1"/>
    <property type="gene ID" value="TraesPARA_EIv1.0_2681820"/>
</dbReference>
<dbReference type="Gramene" id="TraesPARA_EIv1.0_2682020.1">
    <property type="protein sequence ID" value="TraesPARA_EIv1.0_2682020.1.CDS1"/>
    <property type="gene ID" value="TraesPARA_EIv1.0_2682020"/>
</dbReference>
<dbReference type="Gramene" id="TraesRN1D0101058800.1">
    <property type="protein sequence ID" value="TraesRN1D0101058800.1"/>
    <property type="gene ID" value="TraesRN1D0101058800"/>
</dbReference>
<dbReference type="Gramene" id="TraesRN3B0100438300.1">
    <property type="protein sequence ID" value="TraesRN3B0100438300.1"/>
    <property type="gene ID" value="TraesRN3B0100438300"/>
</dbReference>
<dbReference type="Gramene" id="TraesRN3D0100108100.1">
    <property type="protein sequence ID" value="TraesRN3D0100108100.1"/>
    <property type="gene ID" value="TraesRN3D0100108100"/>
</dbReference>
<dbReference type="Gramene" id="TraesSYM3B03G01564020.1">
    <property type="protein sequence ID" value="TraesSYM3B03G01564020.1.CDS1"/>
    <property type="gene ID" value="TraesSYM3B03G01564020"/>
</dbReference>
<dbReference type="KEGG" id="taes:803203"/>
<dbReference type="eggNOG" id="KOG0840">
    <property type="taxonomic scope" value="Eukaryota"/>
</dbReference>
<dbReference type="HOGENOM" id="CLU_058707_4_2_1"/>
<dbReference type="BRENDA" id="3.4.21.92">
    <property type="organism ID" value="6500"/>
</dbReference>
<dbReference type="Proteomes" id="UP000019116">
    <property type="component" value="Chloroplast"/>
</dbReference>
<dbReference type="GO" id="GO:0009570">
    <property type="term" value="C:chloroplast stroma"/>
    <property type="evidence" value="ECO:0007669"/>
    <property type="project" value="UniProtKB-SubCell"/>
</dbReference>
<dbReference type="GO" id="GO:0004176">
    <property type="term" value="F:ATP-dependent peptidase activity"/>
    <property type="evidence" value="ECO:0007669"/>
    <property type="project" value="InterPro"/>
</dbReference>
<dbReference type="GO" id="GO:0004252">
    <property type="term" value="F:serine-type endopeptidase activity"/>
    <property type="evidence" value="ECO:0007669"/>
    <property type="project" value="UniProtKB-UniRule"/>
</dbReference>
<dbReference type="GO" id="GO:0006508">
    <property type="term" value="P:proteolysis"/>
    <property type="evidence" value="ECO:0007669"/>
    <property type="project" value="UniProtKB-UniRule"/>
</dbReference>
<dbReference type="CDD" id="cd07017">
    <property type="entry name" value="S14_ClpP_2"/>
    <property type="match status" value="1"/>
</dbReference>
<dbReference type="FunFam" id="3.90.226.10:FF:000006">
    <property type="entry name" value="ATP-dependent Clp protease proteolytic subunit"/>
    <property type="match status" value="1"/>
</dbReference>
<dbReference type="Gene3D" id="3.90.226.10">
    <property type="entry name" value="2-enoyl-CoA Hydratase, Chain A, domain 1"/>
    <property type="match status" value="1"/>
</dbReference>
<dbReference type="HAMAP" id="MF_00444">
    <property type="entry name" value="ClpP"/>
    <property type="match status" value="1"/>
</dbReference>
<dbReference type="InterPro" id="IPR001907">
    <property type="entry name" value="ClpP"/>
</dbReference>
<dbReference type="InterPro" id="IPR029045">
    <property type="entry name" value="ClpP/crotonase-like_dom_sf"/>
</dbReference>
<dbReference type="InterPro" id="IPR023562">
    <property type="entry name" value="ClpP/TepA"/>
</dbReference>
<dbReference type="InterPro" id="IPR033135">
    <property type="entry name" value="ClpP_His_AS"/>
</dbReference>
<dbReference type="InterPro" id="IPR018215">
    <property type="entry name" value="ClpP_Ser_AS"/>
</dbReference>
<dbReference type="PANTHER" id="PTHR48481">
    <property type="entry name" value="ATP-DEPENDENT CLP PROTEASE PROTEOLYTIC SUBUNIT"/>
    <property type="match status" value="1"/>
</dbReference>
<dbReference type="PANTHER" id="PTHR48481:SF1">
    <property type="entry name" value="ATP-DEPENDENT CLP PROTEASE PROTEOLYTIC SUBUNIT"/>
    <property type="match status" value="1"/>
</dbReference>
<dbReference type="Pfam" id="PF00574">
    <property type="entry name" value="CLP_protease"/>
    <property type="match status" value="1"/>
</dbReference>
<dbReference type="PRINTS" id="PR00127">
    <property type="entry name" value="CLPPROTEASEP"/>
</dbReference>
<dbReference type="SUPFAM" id="SSF52096">
    <property type="entry name" value="ClpP/crotonase"/>
    <property type="match status" value="1"/>
</dbReference>
<dbReference type="PROSITE" id="PS00382">
    <property type="entry name" value="CLP_PROTEASE_HIS"/>
    <property type="match status" value="1"/>
</dbReference>
<dbReference type="PROSITE" id="PS00381">
    <property type="entry name" value="CLP_PROTEASE_SER"/>
    <property type="match status" value="1"/>
</dbReference>
<sequence>MPIGVPKVPYRIPGDEEATWVDLYNVMYRERTLFLGQEIRCEITNHITGLMVYLSIEDGISDIFLFINSPGGWLISGMAIFDTMQTVTPDIYTICLGIAASMASFILLGGEPTKRIAFPHARIMLHQPASAYYRARTPEFLLEVEELHKVREMITRVYAVRTGKPFWVVSEDMERDVFMSADEAKAYGLVDIVGDEMIDKHCDTDPVWFPEMFKDW</sequence>
<evidence type="ECO:0000255" key="1">
    <source>
        <dbReference type="HAMAP-Rule" id="MF_00444"/>
    </source>
</evidence>
<evidence type="ECO:0000305" key="2"/>
<feature type="chain" id="PRO_0000179761" description="ATP-dependent Clp protease proteolytic subunit">
    <location>
        <begin position="1"/>
        <end position="216"/>
    </location>
</feature>
<feature type="active site" description="Nucleophile" evidence="1">
    <location>
        <position position="101"/>
    </location>
</feature>
<feature type="active site" evidence="1">
    <location>
        <position position="126"/>
    </location>
</feature>
<feature type="sequence conflict" description="In Ref. 1; CAA38354." evidence="2" ref="1">
    <original>G</original>
    <variation>R</variation>
    <location>
        <position position="14"/>
    </location>
</feature>
<feature type="sequence conflict" description="In Ref. 1; CAA38354." evidence="2" ref="1">
    <original>I</original>
    <variation>R</variation>
    <location>
        <position position="94"/>
    </location>
</feature>
<feature type="sequence conflict" description="In Ref. 1; CAA38354." evidence="2" ref="1">
    <original>F</original>
    <variation>S</variation>
    <location>
        <position position="140"/>
    </location>
</feature>
<feature type="sequence conflict" description="In Ref. 1; CAA38354." evidence="2" ref="1">
    <original>G</original>
    <variation>E</variation>
    <location>
        <position position="188"/>
    </location>
</feature>
<geneLocation type="chloroplast"/>
<organism>
    <name type="scientific">Triticum aestivum</name>
    <name type="common">Wheat</name>
    <dbReference type="NCBI Taxonomy" id="4565"/>
    <lineage>
        <taxon>Eukaryota</taxon>
        <taxon>Viridiplantae</taxon>
        <taxon>Streptophyta</taxon>
        <taxon>Embryophyta</taxon>
        <taxon>Tracheophyta</taxon>
        <taxon>Spermatophyta</taxon>
        <taxon>Magnoliopsida</taxon>
        <taxon>Liliopsida</taxon>
        <taxon>Poales</taxon>
        <taxon>Poaceae</taxon>
        <taxon>BOP clade</taxon>
        <taxon>Pooideae</taxon>
        <taxon>Triticodae</taxon>
        <taxon>Triticeae</taxon>
        <taxon>Triticinae</taxon>
        <taxon>Triticum</taxon>
    </lineage>
</organism>
<accession>P24064</accession>
<reference key="1">
    <citation type="journal article" date="1990" name="Plant Mol. Biol.">
        <title>Nucleotide sequence of a wheat chloroplast gene encoding the proteolytic subunit of an ATP-dependent protease.</title>
        <authorList>
            <person name="Gray J.C."/>
            <person name="Hird S.M."/>
            <person name="Dyer T.A."/>
        </authorList>
    </citation>
    <scope>NUCLEOTIDE SEQUENCE [GENOMIC DNA]</scope>
    <source>
        <strain>cv. Mardler</strain>
    </source>
</reference>
<reference key="2">
    <citation type="journal article" date="2000" name="Plant Mol. Biol. Rep.">
        <title>Chinese spring wheat (Triticum aestivum L.) chloroplast genome: complete sequence and contig clones.</title>
        <authorList>
            <person name="Ogihara Y."/>
            <person name="Isono K."/>
            <person name="Kojima T."/>
            <person name="Endo A."/>
            <person name="Hanaoka M."/>
            <person name="Shiina T."/>
            <person name="Terachi T."/>
            <person name="Utsugi S."/>
            <person name="Murata M."/>
            <person name="Mori N."/>
            <person name="Takumi S."/>
            <person name="Ikeo K."/>
            <person name="Gojobori T."/>
            <person name="Murai R."/>
            <person name="Murai K."/>
            <person name="Matsuoka Y."/>
            <person name="Ohnishi Y."/>
            <person name="Tajiri H."/>
            <person name="Tsunewaki K."/>
        </authorList>
    </citation>
    <scope>NUCLEOTIDE SEQUENCE [LARGE SCALE GENOMIC DNA]</scope>
    <source>
        <strain>cv. Chinese Spring</strain>
    </source>
</reference>
<comment type="function">
    <text evidence="1">Cleaves peptides in various proteins in a process that requires ATP hydrolysis. Has a chymotrypsin-like activity. Plays a major role in the degradation of misfolded proteins.</text>
</comment>
<comment type="catalytic activity">
    <reaction evidence="1">
        <text>Hydrolysis of proteins to small peptides in the presence of ATP and magnesium. alpha-casein is the usual test substrate. In the absence of ATP, only oligopeptides shorter than five residues are hydrolyzed (such as succinyl-Leu-Tyr-|-NHMec, and Leu-Tyr-Leu-|-Tyr-Trp, in which cleavage of the -Tyr-|-Leu- and -Tyr-|-Trp bonds also occurs).</text>
        <dbReference type="EC" id="3.4.21.92"/>
    </reaction>
</comment>
<comment type="subunit">
    <text>Component of the chloroplastic Clp protease core complex.</text>
</comment>
<comment type="subcellular location">
    <subcellularLocation>
        <location evidence="1">Plastid</location>
        <location evidence="1">Chloroplast stroma</location>
    </subcellularLocation>
</comment>
<comment type="similarity">
    <text evidence="1">Belongs to the peptidase S14 family.</text>
</comment>
<proteinExistence type="inferred from homology"/>
<name>CLPP_WHEAT</name>
<gene>
    <name evidence="1" type="primary">clpP</name>
</gene>
<keyword id="KW-0150">Chloroplast</keyword>
<keyword id="KW-0378">Hydrolase</keyword>
<keyword id="KW-0934">Plastid</keyword>
<keyword id="KW-0645">Protease</keyword>
<keyword id="KW-1185">Reference proteome</keyword>
<keyword id="KW-0720">Serine protease</keyword>
<protein>
    <recommendedName>
        <fullName evidence="1">ATP-dependent Clp protease proteolytic subunit</fullName>
        <ecNumber evidence="1">3.4.21.92</ecNumber>
    </recommendedName>
    <alternativeName>
        <fullName evidence="1">Endopeptidase Clp</fullName>
    </alternativeName>
</protein>